<organism>
    <name type="scientific">Mycobacterium tuberculosis (strain CDC 1551 / Oshkosh)</name>
    <dbReference type="NCBI Taxonomy" id="83331"/>
    <lineage>
        <taxon>Bacteria</taxon>
        <taxon>Bacillati</taxon>
        <taxon>Actinomycetota</taxon>
        <taxon>Actinomycetes</taxon>
        <taxon>Mycobacteriales</taxon>
        <taxon>Mycobacteriaceae</taxon>
        <taxon>Mycobacterium</taxon>
        <taxon>Mycobacterium tuberculosis complex</taxon>
    </lineage>
</organism>
<proteinExistence type="inferred from homology"/>
<comment type="function">
    <text evidence="2">Required for wild-type expression of ArfA and ammonia secretion, not however part of an ammonia transporter.</text>
</comment>
<comment type="subcellular location">
    <subcellularLocation>
        <location evidence="1">Cell membrane</location>
        <topology evidence="3">Single-pass membrane protein</topology>
    </subcellularLocation>
</comment>
<comment type="similarity">
    <text evidence="5">Belongs to the ArfC membrane protein family.</text>
</comment>
<comment type="sequence caution" evidence="5">
    <conflict type="erroneous initiation">
        <sequence resource="EMBL-CDS" id="AAK45171"/>
    </conflict>
    <text>Extended N-terminus.</text>
</comment>
<accession>P9WJG4</accession>
<accession>L0T6R9</accession>
<accession>P64757</accession>
<accession>Q10559</accession>
<protein>
    <recommendedName>
        <fullName>Uncharacterized membrane protein ArfC</fullName>
    </recommendedName>
</protein>
<name>ARFC_MYCTO</name>
<dbReference type="EMBL" id="AE000516">
    <property type="protein sequence ID" value="AAK45171.1"/>
    <property type="status" value="ALT_INIT"/>
    <property type="molecule type" value="Genomic_DNA"/>
</dbReference>
<dbReference type="PIR" id="B70783">
    <property type="entry name" value="B70783"/>
</dbReference>
<dbReference type="RefSeq" id="WP_003404688.1">
    <property type="nucleotide sequence ID" value="NZ_KK341227.1"/>
</dbReference>
<dbReference type="SMR" id="P9WJG4"/>
<dbReference type="KEGG" id="mtc:MT0924"/>
<dbReference type="PATRIC" id="fig|83331.31.peg.993"/>
<dbReference type="HOGENOM" id="CLU_1523548_0_0_11"/>
<dbReference type="Proteomes" id="UP000001020">
    <property type="component" value="Chromosome"/>
</dbReference>
<dbReference type="GO" id="GO:0005886">
    <property type="term" value="C:plasma membrane"/>
    <property type="evidence" value="ECO:0007669"/>
    <property type="project" value="UniProtKB-SubCell"/>
</dbReference>
<feature type="chain" id="PRO_0000427834" description="Uncharacterized membrane protein ArfC">
    <location>
        <begin position="1"/>
        <end position="175"/>
    </location>
</feature>
<feature type="transmembrane region" description="Helical" evidence="3">
    <location>
        <begin position="4"/>
        <end position="26"/>
    </location>
</feature>
<feature type="region of interest" description="Disordered" evidence="4">
    <location>
        <begin position="36"/>
        <end position="93"/>
    </location>
</feature>
<evidence type="ECO:0000250" key="1">
    <source>
        <dbReference type="UniProtKB" id="A1KH33"/>
    </source>
</evidence>
<evidence type="ECO:0000250" key="2">
    <source>
        <dbReference type="UniProtKB" id="P9WJG5"/>
    </source>
</evidence>
<evidence type="ECO:0000255" key="3"/>
<evidence type="ECO:0000256" key="4">
    <source>
        <dbReference type="SAM" id="MobiDB-lite"/>
    </source>
</evidence>
<evidence type="ECO:0000305" key="5"/>
<keyword id="KW-1003">Cell membrane</keyword>
<keyword id="KW-0472">Membrane</keyword>
<keyword id="KW-1185">Reference proteome</keyword>
<keyword id="KW-0812">Transmembrane</keyword>
<keyword id="KW-1133">Transmembrane helix</keyword>
<reference key="1">
    <citation type="journal article" date="2002" name="J. Bacteriol.">
        <title>Whole-genome comparison of Mycobacterium tuberculosis clinical and laboratory strains.</title>
        <authorList>
            <person name="Fleischmann R.D."/>
            <person name="Alland D."/>
            <person name="Eisen J.A."/>
            <person name="Carpenter L."/>
            <person name="White O."/>
            <person name="Peterson J.D."/>
            <person name="DeBoy R.T."/>
            <person name="Dodson R.J."/>
            <person name="Gwinn M.L."/>
            <person name="Haft D.H."/>
            <person name="Hickey E.K."/>
            <person name="Kolonay J.F."/>
            <person name="Nelson W.C."/>
            <person name="Umayam L.A."/>
            <person name="Ermolaeva M.D."/>
            <person name="Salzberg S.L."/>
            <person name="Delcher A."/>
            <person name="Utterback T.R."/>
            <person name="Weidman J.F."/>
            <person name="Khouri H.M."/>
            <person name="Gill J."/>
            <person name="Mikula A."/>
            <person name="Bishai W."/>
            <person name="Jacobs W.R. Jr."/>
            <person name="Venter J.C."/>
            <person name="Fraser C.M."/>
        </authorList>
    </citation>
    <scope>NUCLEOTIDE SEQUENCE [LARGE SCALE GENOMIC DNA]</scope>
    <source>
        <strain>CDC 1551 / Oshkosh</strain>
    </source>
</reference>
<sequence length="175" mass="18909">MEHVHWWLAGLAFTLGMVLTSTLMVRPVEHQVLVKKSVRGSSAKSKPPTARKPAVKSGTKREESPTAKTKVATESAAEQIPVAGEPAAEPIPVAGEPAARIPVVPYAPYGPGSARAGADGSGPQGWLVKGRSDTRLYYTPEDPTYDPTVAQVWFQDEESAARAFFTPWRKSTRRT</sequence>
<gene>
    <name type="primary">arfC</name>
    <name type="ordered locus">MT0924</name>
</gene>